<evidence type="ECO:0000255" key="1">
    <source>
        <dbReference type="HAMAP-Rule" id="MF_00164"/>
    </source>
</evidence>
<comment type="function">
    <text evidence="1">Catalyzes the first step in hexosamine metabolism, converting fructose-6P into glucosamine-6P using glutamine as a nitrogen source.</text>
</comment>
<comment type="catalytic activity">
    <reaction evidence="1">
        <text>D-fructose 6-phosphate + L-glutamine = D-glucosamine 6-phosphate + L-glutamate</text>
        <dbReference type="Rhea" id="RHEA:13237"/>
        <dbReference type="ChEBI" id="CHEBI:29985"/>
        <dbReference type="ChEBI" id="CHEBI:58359"/>
        <dbReference type="ChEBI" id="CHEBI:58725"/>
        <dbReference type="ChEBI" id="CHEBI:61527"/>
        <dbReference type="EC" id="2.6.1.16"/>
    </reaction>
</comment>
<comment type="subunit">
    <text evidence="1">Homodimer.</text>
</comment>
<comment type="subcellular location">
    <subcellularLocation>
        <location evidence="1">Cytoplasm</location>
    </subcellularLocation>
</comment>
<organism>
    <name type="scientific">Pectobacterium atrosepticum (strain SCRI 1043 / ATCC BAA-672)</name>
    <name type="common">Erwinia carotovora subsp. atroseptica</name>
    <dbReference type="NCBI Taxonomy" id="218491"/>
    <lineage>
        <taxon>Bacteria</taxon>
        <taxon>Pseudomonadati</taxon>
        <taxon>Pseudomonadota</taxon>
        <taxon>Gammaproteobacteria</taxon>
        <taxon>Enterobacterales</taxon>
        <taxon>Pectobacteriaceae</taxon>
        <taxon>Pectobacterium</taxon>
    </lineage>
</organism>
<dbReference type="EC" id="2.6.1.16" evidence="1"/>
<dbReference type="EMBL" id="BX950851">
    <property type="protein sequence ID" value="CAG77403.1"/>
    <property type="molecule type" value="Genomic_DNA"/>
</dbReference>
<dbReference type="RefSeq" id="WP_011095963.1">
    <property type="nucleotide sequence ID" value="NC_004547.2"/>
</dbReference>
<dbReference type="SMR" id="Q6CYJ9"/>
<dbReference type="STRING" id="218491.ECA4508"/>
<dbReference type="GeneID" id="57211194"/>
<dbReference type="KEGG" id="eca:ECA4508"/>
<dbReference type="PATRIC" id="fig|218491.5.peg.4595"/>
<dbReference type="eggNOG" id="COG0449">
    <property type="taxonomic scope" value="Bacteria"/>
</dbReference>
<dbReference type="HOGENOM" id="CLU_012520_5_2_6"/>
<dbReference type="OrthoDB" id="9761808at2"/>
<dbReference type="Proteomes" id="UP000007966">
    <property type="component" value="Chromosome"/>
</dbReference>
<dbReference type="GO" id="GO:0005829">
    <property type="term" value="C:cytosol"/>
    <property type="evidence" value="ECO:0007669"/>
    <property type="project" value="TreeGrafter"/>
</dbReference>
<dbReference type="GO" id="GO:0097367">
    <property type="term" value="F:carbohydrate derivative binding"/>
    <property type="evidence" value="ECO:0007669"/>
    <property type="project" value="InterPro"/>
</dbReference>
<dbReference type="GO" id="GO:0004360">
    <property type="term" value="F:glutamine-fructose-6-phosphate transaminase (isomerizing) activity"/>
    <property type="evidence" value="ECO:0007669"/>
    <property type="project" value="UniProtKB-UniRule"/>
</dbReference>
<dbReference type="GO" id="GO:0005975">
    <property type="term" value="P:carbohydrate metabolic process"/>
    <property type="evidence" value="ECO:0007669"/>
    <property type="project" value="UniProtKB-UniRule"/>
</dbReference>
<dbReference type="GO" id="GO:0006002">
    <property type="term" value="P:fructose 6-phosphate metabolic process"/>
    <property type="evidence" value="ECO:0007669"/>
    <property type="project" value="TreeGrafter"/>
</dbReference>
<dbReference type="GO" id="GO:0006487">
    <property type="term" value="P:protein N-linked glycosylation"/>
    <property type="evidence" value="ECO:0007669"/>
    <property type="project" value="TreeGrafter"/>
</dbReference>
<dbReference type="GO" id="GO:0006047">
    <property type="term" value="P:UDP-N-acetylglucosamine metabolic process"/>
    <property type="evidence" value="ECO:0007669"/>
    <property type="project" value="TreeGrafter"/>
</dbReference>
<dbReference type="CDD" id="cd00714">
    <property type="entry name" value="GFAT"/>
    <property type="match status" value="1"/>
</dbReference>
<dbReference type="CDD" id="cd05008">
    <property type="entry name" value="SIS_GlmS_GlmD_1"/>
    <property type="match status" value="1"/>
</dbReference>
<dbReference type="CDD" id="cd05009">
    <property type="entry name" value="SIS_GlmS_GlmD_2"/>
    <property type="match status" value="1"/>
</dbReference>
<dbReference type="FunFam" id="3.40.50.10490:FF:000001">
    <property type="entry name" value="Glutamine--fructose-6-phosphate aminotransferase [isomerizing]"/>
    <property type="match status" value="1"/>
</dbReference>
<dbReference type="FunFam" id="3.60.20.10:FF:000006">
    <property type="entry name" value="Glutamine--fructose-6-phosphate aminotransferase [isomerizing]"/>
    <property type="match status" value="1"/>
</dbReference>
<dbReference type="Gene3D" id="3.40.50.10490">
    <property type="entry name" value="Glucose-6-phosphate isomerase like protein, domain 1"/>
    <property type="match status" value="2"/>
</dbReference>
<dbReference type="Gene3D" id="3.60.20.10">
    <property type="entry name" value="Glutamine Phosphoribosylpyrophosphate, subunit 1, domain 1"/>
    <property type="match status" value="1"/>
</dbReference>
<dbReference type="HAMAP" id="MF_00164">
    <property type="entry name" value="GlmS"/>
    <property type="match status" value="1"/>
</dbReference>
<dbReference type="InterPro" id="IPR017932">
    <property type="entry name" value="GATase_2_dom"/>
</dbReference>
<dbReference type="InterPro" id="IPR005855">
    <property type="entry name" value="GFAT"/>
</dbReference>
<dbReference type="InterPro" id="IPR047084">
    <property type="entry name" value="GFAT_N"/>
</dbReference>
<dbReference type="InterPro" id="IPR035466">
    <property type="entry name" value="GlmS/AgaS_SIS"/>
</dbReference>
<dbReference type="InterPro" id="IPR035490">
    <property type="entry name" value="GlmS/FrlB_SIS"/>
</dbReference>
<dbReference type="InterPro" id="IPR029055">
    <property type="entry name" value="Ntn_hydrolases_N"/>
</dbReference>
<dbReference type="InterPro" id="IPR001347">
    <property type="entry name" value="SIS_dom"/>
</dbReference>
<dbReference type="InterPro" id="IPR046348">
    <property type="entry name" value="SIS_dom_sf"/>
</dbReference>
<dbReference type="NCBIfam" id="TIGR01135">
    <property type="entry name" value="glmS"/>
    <property type="match status" value="1"/>
</dbReference>
<dbReference type="NCBIfam" id="NF001484">
    <property type="entry name" value="PRK00331.1"/>
    <property type="match status" value="1"/>
</dbReference>
<dbReference type="PANTHER" id="PTHR10937">
    <property type="entry name" value="GLUCOSAMINE--FRUCTOSE-6-PHOSPHATE AMINOTRANSFERASE, ISOMERIZING"/>
    <property type="match status" value="1"/>
</dbReference>
<dbReference type="PANTHER" id="PTHR10937:SF0">
    <property type="entry name" value="GLUTAMINE--FRUCTOSE-6-PHOSPHATE TRANSAMINASE (ISOMERIZING)"/>
    <property type="match status" value="1"/>
</dbReference>
<dbReference type="Pfam" id="PF13522">
    <property type="entry name" value="GATase_6"/>
    <property type="match status" value="1"/>
</dbReference>
<dbReference type="Pfam" id="PF01380">
    <property type="entry name" value="SIS"/>
    <property type="match status" value="2"/>
</dbReference>
<dbReference type="SUPFAM" id="SSF56235">
    <property type="entry name" value="N-terminal nucleophile aminohydrolases (Ntn hydrolases)"/>
    <property type="match status" value="1"/>
</dbReference>
<dbReference type="SUPFAM" id="SSF53697">
    <property type="entry name" value="SIS domain"/>
    <property type="match status" value="1"/>
</dbReference>
<dbReference type="PROSITE" id="PS51278">
    <property type="entry name" value="GATASE_TYPE_2"/>
    <property type="match status" value="1"/>
</dbReference>
<dbReference type="PROSITE" id="PS51464">
    <property type="entry name" value="SIS"/>
    <property type="match status" value="2"/>
</dbReference>
<feature type="initiator methionine" description="Removed" evidence="1">
    <location>
        <position position="1"/>
    </location>
</feature>
<feature type="chain" id="PRO_0000135331" description="Glutamine--fructose-6-phosphate aminotransferase [isomerizing]">
    <location>
        <begin position="2"/>
        <end position="610"/>
    </location>
</feature>
<feature type="domain" description="Glutamine amidotransferase type-2" evidence="1">
    <location>
        <begin position="2"/>
        <end position="219"/>
    </location>
</feature>
<feature type="domain" description="SIS 1" evidence="1">
    <location>
        <begin position="287"/>
        <end position="427"/>
    </location>
</feature>
<feature type="domain" description="SIS 2" evidence="1">
    <location>
        <begin position="459"/>
        <end position="600"/>
    </location>
</feature>
<feature type="active site" description="Nucleophile; for GATase activity" evidence="1">
    <location>
        <position position="2"/>
    </location>
</feature>
<feature type="active site" description="For Fru-6P isomerization activity" evidence="1">
    <location>
        <position position="605"/>
    </location>
</feature>
<accession>Q6CYJ9</accession>
<name>GLMS_PECAS</name>
<reference key="1">
    <citation type="journal article" date="2004" name="Proc. Natl. Acad. Sci. U.S.A.">
        <title>Genome sequence of the enterobacterial phytopathogen Erwinia carotovora subsp. atroseptica and characterization of virulence factors.</title>
        <authorList>
            <person name="Bell K.S."/>
            <person name="Sebaihia M."/>
            <person name="Pritchard L."/>
            <person name="Holden M.T.G."/>
            <person name="Hyman L.J."/>
            <person name="Holeva M.C."/>
            <person name="Thomson N.R."/>
            <person name="Bentley S.D."/>
            <person name="Churcher L.J.C."/>
            <person name="Mungall K."/>
            <person name="Atkin R."/>
            <person name="Bason N."/>
            <person name="Brooks K."/>
            <person name="Chillingworth T."/>
            <person name="Clark K."/>
            <person name="Doggett J."/>
            <person name="Fraser A."/>
            <person name="Hance Z."/>
            <person name="Hauser H."/>
            <person name="Jagels K."/>
            <person name="Moule S."/>
            <person name="Norbertczak H."/>
            <person name="Ormond D."/>
            <person name="Price C."/>
            <person name="Quail M.A."/>
            <person name="Sanders M."/>
            <person name="Walker D."/>
            <person name="Whitehead S."/>
            <person name="Salmond G.P.C."/>
            <person name="Birch P.R.J."/>
            <person name="Parkhill J."/>
            <person name="Toth I.K."/>
        </authorList>
    </citation>
    <scope>NUCLEOTIDE SEQUENCE [LARGE SCALE GENOMIC DNA]</scope>
    <source>
        <strain>SCRI 1043 / ATCC BAA-672</strain>
    </source>
</reference>
<protein>
    <recommendedName>
        <fullName evidence="1">Glutamine--fructose-6-phosphate aminotransferase [isomerizing]</fullName>
        <ecNumber evidence="1">2.6.1.16</ecNumber>
    </recommendedName>
    <alternativeName>
        <fullName evidence="1">D-fructose-6-phosphate amidotransferase</fullName>
    </alternativeName>
    <alternativeName>
        <fullName evidence="1">GFAT</fullName>
    </alternativeName>
    <alternativeName>
        <fullName evidence="1">Glucosamine-6-phosphate synthase</fullName>
    </alternativeName>
    <alternativeName>
        <fullName evidence="1">Hexosephosphate aminotransferase</fullName>
    </alternativeName>
    <alternativeName>
        <fullName evidence="1">L-glutamine--D-fructose-6-phosphate amidotransferase</fullName>
    </alternativeName>
</protein>
<keyword id="KW-0032">Aminotransferase</keyword>
<keyword id="KW-0963">Cytoplasm</keyword>
<keyword id="KW-0315">Glutamine amidotransferase</keyword>
<keyword id="KW-1185">Reference proteome</keyword>
<keyword id="KW-0677">Repeat</keyword>
<keyword id="KW-0808">Transferase</keyword>
<sequence>MCGIVGAVAQRDVAEILLEGLRRLEYRGYDSAGLAVVDSEGHVARLRRLGKVQVLSQAAEEHELHGGTGIAHTRWATHGEPSEENAHPHISEHITIVHNGIIENHEPLRELMIGRGYRFVSETDTEVVAHLVHFEQKQNGGTLVEVVKRVIPQLRGAYGMVVLDNRDSSVLVAARSGSPLVIGRGVGENFIASDQLALLPVTRRFMFLEEGDVAEITRRDVRVFDKSGQLATREEIESKVSYDAGDKGAYRHYMQKEIYEQPMAIKNTLEGRFSHGEINLSELGPKADELLAKVEHVQIIACGTSYNSGMVSRYWFEALAGIPCDVEIASEFRYRKPAVRKNSLMITLSQSGETADTLAALRLSKELGYLGSLAICNVAGSSLVRESDMALMTKAGVEIGVASTKAFTTQLTVLLMLVARVGRLRGMDAQIEHDIVHGLQALPARIEQMLSQDKLIESLAEGFSDKHHALFLGRGDQYPIAMEGALKLKEISYIHAEAYAAGELKHGPLALIDADMPVVVVAPNNELLEKLKSNIEEVRARGGELYVFADEDAGFTSSENMKIIPLPHIEEVIAPIFYTVPLQLLSYHVALIKGTDVDQPRNLAKSVTVE</sequence>
<proteinExistence type="inferred from homology"/>
<gene>
    <name evidence="1" type="primary">glmS</name>
    <name type="ordered locus">ECA4508</name>
</gene>